<protein>
    <recommendedName>
        <fullName evidence="1">Inorganic pyrophosphatase</fullName>
        <ecNumber evidence="1">3.6.1.1</ecNumber>
    </recommendedName>
    <alternativeName>
        <fullName evidence="1">Pyrophosphate phospho-hydrolase</fullName>
        <shortName evidence="1">PPase</shortName>
    </alternativeName>
</protein>
<comment type="function">
    <text evidence="1">Catalyzes the hydrolysis of inorganic pyrophosphate (PPi) forming two phosphate ions.</text>
</comment>
<comment type="catalytic activity">
    <reaction evidence="1">
        <text>diphosphate + H2O = 2 phosphate + H(+)</text>
        <dbReference type="Rhea" id="RHEA:24576"/>
        <dbReference type="ChEBI" id="CHEBI:15377"/>
        <dbReference type="ChEBI" id="CHEBI:15378"/>
        <dbReference type="ChEBI" id="CHEBI:33019"/>
        <dbReference type="ChEBI" id="CHEBI:43474"/>
        <dbReference type="EC" id="3.6.1.1"/>
    </reaction>
</comment>
<comment type="cofactor">
    <cofactor evidence="1">
        <name>Mg(2+)</name>
        <dbReference type="ChEBI" id="CHEBI:18420"/>
    </cofactor>
</comment>
<comment type="subunit">
    <text evidence="1">Homohexamer.</text>
</comment>
<comment type="subcellular location">
    <subcellularLocation>
        <location evidence="1">Cytoplasm</location>
    </subcellularLocation>
</comment>
<comment type="similarity">
    <text evidence="1">Belongs to the PPase family.</text>
</comment>
<keyword id="KW-0963">Cytoplasm</keyword>
<keyword id="KW-0378">Hydrolase</keyword>
<keyword id="KW-0460">Magnesium</keyword>
<keyword id="KW-0479">Metal-binding</keyword>
<name>IPYR_RICTY</name>
<organism>
    <name type="scientific">Rickettsia typhi (strain ATCC VR-144 / Wilmington)</name>
    <dbReference type="NCBI Taxonomy" id="257363"/>
    <lineage>
        <taxon>Bacteria</taxon>
        <taxon>Pseudomonadati</taxon>
        <taxon>Pseudomonadota</taxon>
        <taxon>Alphaproteobacteria</taxon>
        <taxon>Rickettsiales</taxon>
        <taxon>Rickettsiaceae</taxon>
        <taxon>Rickettsieae</taxon>
        <taxon>Rickettsia</taxon>
        <taxon>typhus group</taxon>
    </lineage>
</organism>
<dbReference type="EC" id="3.6.1.1" evidence="1"/>
<dbReference type="EMBL" id="AE017197">
    <property type="protein sequence ID" value="AAU04043.1"/>
    <property type="molecule type" value="Genomic_DNA"/>
</dbReference>
<dbReference type="RefSeq" id="WP_011191024.1">
    <property type="nucleotide sequence ID" value="NC_006142.1"/>
</dbReference>
<dbReference type="SMR" id="Q68WE9"/>
<dbReference type="KEGG" id="rty:RT0578"/>
<dbReference type="eggNOG" id="COG0221">
    <property type="taxonomic scope" value="Bacteria"/>
</dbReference>
<dbReference type="HOGENOM" id="CLU_073198_1_0_5"/>
<dbReference type="OrthoDB" id="5187599at2"/>
<dbReference type="Proteomes" id="UP000000604">
    <property type="component" value="Chromosome"/>
</dbReference>
<dbReference type="GO" id="GO:0005737">
    <property type="term" value="C:cytoplasm"/>
    <property type="evidence" value="ECO:0007669"/>
    <property type="project" value="UniProtKB-SubCell"/>
</dbReference>
<dbReference type="GO" id="GO:0004427">
    <property type="term" value="F:inorganic diphosphate phosphatase activity"/>
    <property type="evidence" value="ECO:0007669"/>
    <property type="project" value="UniProtKB-UniRule"/>
</dbReference>
<dbReference type="GO" id="GO:0000287">
    <property type="term" value="F:magnesium ion binding"/>
    <property type="evidence" value="ECO:0007669"/>
    <property type="project" value="UniProtKB-UniRule"/>
</dbReference>
<dbReference type="GO" id="GO:0006796">
    <property type="term" value="P:phosphate-containing compound metabolic process"/>
    <property type="evidence" value="ECO:0007669"/>
    <property type="project" value="InterPro"/>
</dbReference>
<dbReference type="CDD" id="cd00412">
    <property type="entry name" value="pyrophosphatase"/>
    <property type="match status" value="1"/>
</dbReference>
<dbReference type="FunFam" id="3.90.80.10:FF:000003">
    <property type="entry name" value="Inorganic pyrophosphatase"/>
    <property type="match status" value="1"/>
</dbReference>
<dbReference type="Gene3D" id="3.90.80.10">
    <property type="entry name" value="Inorganic pyrophosphatase"/>
    <property type="match status" value="1"/>
</dbReference>
<dbReference type="HAMAP" id="MF_00209">
    <property type="entry name" value="Inorganic_PPase"/>
    <property type="match status" value="1"/>
</dbReference>
<dbReference type="InterPro" id="IPR008162">
    <property type="entry name" value="Pyrophosphatase"/>
</dbReference>
<dbReference type="InterPro" id="IPR036649">
    <property type="entry name" value="Pyrophosphatase_sf"/>
</dbReference>
<dbReference type="NCBIfam" id="NF002317">
    <property type="entry name" value="PRK01250.1"/>
    <property type="match status" value="1"/>
</dbReference>
<dbReference type="PANTHER" id="PTHR10286">
    <property type="entry name" value="INORGANIC PYROPHOSPHATASE"/>
    <property type="match status" value="1"/>
</dbReference>
<dbReference type="Pfam" id="PF00719">
    <property type="entry name" value="Pyrophosphatase"/>
    <property type="match status" value="1"/>
</dbReference>
<dbReference type="SUPFAM" id="SSF50324">
    <property type="entry name" value="Inorganic pyrophosphatase"/>
    <property type="match status" value="1"/>
</dbReference>
<dbReference type="PROSITE" id="PS00387">
    <property type="entry name" value="PPASE"/>
    <property type="match status" value="1"/>
</dbReference>
<sequence length="178" mass="20370">MFIDKIKAKANNNEINVIIEIPMNSGPIKYEFDKESGAIFVDRFMQTTMSYPCNYGFIPDTLSNDGDPVDVLVVAHHPVVPGSVIKCRAIGVLMMEDESGLDEKIIAVPTSKLDITFDHIQELDDLCKMLKKRIVHFFEHYKDLEKDKWVKVTGWGNKVKAEDLIKEGIDRNQQKWNN</sequence>
<gene>
    <name evidence="1" type="primary">ppa</name>
    <name type="ordered locus">RT0578</name>
</gene>
<evidence type="ECO:0000255" key="1">
    <source>
        <dbReference type="HAMAP-Rule" id="MF_00209"/>
    </source>
</evidence>
<reference key="1">
    <citation type="journal article" date="2004" name="J. Bacteriol.">
        <title>Complete genome sequence of Rickettsia typhi and comparison with sequences of other Rickettsiae.</title>
        <authorList>
            <person name="McLeod M.P."/>
            <person name="Qin X."/>
            <person name="Karpathy S.E."/>
            <person name="Gioia J."/>
            <person name="Highlander S.K."/>
            <person name="Fox G.E."/>
            <person name="McNeill T.Z."/>
            <person name="Jiang H."/>
            <person name="Muzny D."/>
            <person name="Jacob L.S."/>
            <person name="Hawes A.C."/>
            <person name="Sodergren E."/>
            <person name="Gill R."/>
            <person name="Hume J."/>
            <person name="Morgan M."/>
            <person name="Fan G."/>
            <person name="Amin A.G."/>
            <person name="Gibbs R.A."/>
            <person name="Hong C."/>
            <person name="Yu X.-J."/>
            <person name="Walker D.H."/>
            <person name="Weinstock G.M."/>
        </authorList>
    </citation>
    <scope>NUCLEOTIDE SEQUENCE [LARGE SCALE GENOMIC DNA]</scope>
    <source>
        <strain>ATCC VR-144 / Wilmington</strain>
    </source>
</reference>
<accession>Q68WE9</accession>
<feature type="chain" id="PRO_0000278037" description="Inorganic pyrophosphatase">
    <location>
        <begin position="1"/>
        <end position="178"/>
    </location>
</feature>
<feature type="binding site" evidence="1">
    <location>
        <position position="29"/>
    </location>
    <ligand>
        <name>substrate</name>
    </ligand>
</feature>
<feature type="binding site" evidence="1">
    <location>
        <position position="43"/>
    </location>
    <ligand>
        <name>substrate</name>
    </ligand>
</feature>
<feature type="binding site" evidence="1">
    <location>
        <position position="55"/>
    </location>
    <ligand>
        <name>substrate</name>
    </ligand>
</feature>
<feature type="binding site" evidence="1">
    <location>
        <position position="65"/>
    </location>
    <ligand>
        <name>Mg(2+)</name>
        <dbReference type="ChEBI" id="CHEBI:18420"/>
        <label>1</label>
    </ligand>
</feature>
<feature type="binding site" evidence="1">
    <location>
        <position position="70"/>
    </location>
    <ligand>
        <name>Mg(2+)</name>
        <dbReference type="ChEBI" id="CHEBI:18420"/>
        <label>1</label>
    </ligand>
</feature>
<feature type="binding site" evidence="1">
    <location>
        <position position="70"/>
    </location>
    <ligand>
        <name>Mg(2+)</name>
        <dbReference type="ChEBI" id="CHEBI:18420"/>
        <label>2</label>
    </ligand>
</feature>
<feature type="binding site" evidence="1">
    <location>
        <position position="102"/>
    </location>
    <ligand>
        <name>Mg(2+)</name>
        <dbReference type="ChEBI" id="CHEBI:18420"/>
        <label>1</label>
    </ligand>
</feature>
<feature type="binding site" evidence="1">
    <location>
        <position position="141"/>
    </location>
    <ligand>
        <name>substrate</name>
    </ligand>
</feature>
<proteinExistence type="inferred from homology"/>